<evidence type="ECO:0000250" key="1"/>
<evidence type="ECO:0000255" key="2"/>
<evidence type="ECO:0000255" key="3">
    <source>
        <dbReference type="PROSITE-ProRule" id="PRU00076"/>
    </source>
</evidence>
<evidence type="ECO:0000305" key="4"/>
<sequence length="115" mass="12722">MPTDHEEPCGPSHKSFCLNGGLCYVIPTIPSPFCRCVENYTGARCEEVFLPGSSIQTKSNLFEAFVALAVLVTLIIGAFYFLCRKGHFQRASSVQYDINLVETSSTSAHHSHEQH</sequence>
<feature type="chain" id="PRO_0000019485" description="Pro-neuregulin-4, membrane-bound isoform">
    <location>
        <begin position="1"/>
        <end position="115"/>
    </location>
</feature>
<feature type="chain" id="PRO_0000019486" description="Neuregulin-4">
    <location>
        <begin position="1"/>
        <end position="61"/>
    </location>
</feature>
<feature type="topological domain" description="Extracellular" evidence="2">
    <location>
        <begin position="1"/>
        <end position="62"/>
    </location>
</feature>
<feature type="transmembrane region" description="Helical; Note=Internal signal sequence" evidence="2">
    <location>
        <begin position="63"/>
        <end position="83"/>
    </location>
</feature>
<feature type="topological domain" description="Cytoplasmic" evidence="2">
    <location>
        <begin position="84"/>
        <end position="115"/>
    </location>
</feature>
<feature type="domain" description="EGF-like" evidence="3">
    <location>
        <begin position="5"/>
        <end position="46"/>
    </location>
</feature>
<feature type="glycosylation site" description="N-linked (GlcNAc...) asparagine" evidence="2">
    <location>
        <position position="39"/>
    </location>
</feature>
<feature type="disulfide bond" evidence="3">
    <location>
        <begin position="9"/>
        <end position="23"/>
    </location>
</feature>
<feature type="disulfide bond" evidence="3">
    <location>
        <begin position="17"/>
        <end position="34"/>
    </location>
</feature>
<feature type="disulfide bond" evidence="3">
    <location>
        <begin position="36"/>
        <end position="45"/>
    </location>
</feature>
<gene>
    <name type="primary">NRG4</name>
</gene>
<protein>
    <recommendedName>
        <fullName>Pro-neuregulin-4, membrane-bound isoform</fullName>
        <shortName>Pro-NRG4</shortName>
    </recommendedName>
    <component>
        <recommendedName>
            <fullName>Neuregulin-4</fullName>
            <shortName>NRG-4</shortName>
        </recommendedName>
    </component>
</protein>
<organism>
    <name type="scientific">Homo sapiens</name>
    <name type="common">Human</name>
    <dbReference type="NCBI Taxonomy" id="9606"/>
    <lineage>
        <taxon>Eukaryota</taxon>
        <taxon>Metazoa</taxon>
        <taxon>Chordata</taxon>
        <taxon>Craniata</taxon>
        <taxon>Vertebrata</taxon>
        <taxon>Euteleostomi</taxon>
        <taxon>Mammalia</taxon>
        <taxon>Eutheria</taxon>
        <taxon>Euarchontoglires</taxon>
        <taxon>Primates</taxon>
        <taxon>Haplorrhini</taxon>
        <taxon>Catarrhini</taxon>
        <taxon>Hominidae</taxon>
        <taxon>Homo</taxon>
    </lineage>
</organism>
<name>NRG4_HUMAN</name>
<dbReference type="EMBL" id="AC087456">
    <property type="status" value="NOT_ANNOTATED_CDS"/>
    <property type="molecule type" value="Genomic_DNA"/>
</dbReference>
<dbReference type="EMBL" id="CH471136">
    <property type="protein sequence ID" value="EAW99227.1"/>
    <property type="molecule type" value="Genomic_DNA"/>
</dbReference>
<dbReference type="EMBL" id="BC017568">
    <property type="protein sequence ID" value="AAH17568.1"/>
    <property type="molecule type" value="mRNA"/>
</dbReference>
<dbReference type="CCDS" id="CCDS10288.1"/>
<dbReference type="RefSeq" id="NP_612640.1">
    <property type="nucleotide sequence ID" value="NM_138573.4"/>
</dbReference>
<dbReference type="RefSeq" id="XP_016877434.1">
    <property type="nucleotide sequence ID" value="XM_017021945.1"/>
</dbReference>
<dbReference type="RefSeq" id="XP_016877435.1">
    <property type="nucleotide sequence ID" value="XM_017021946.1"/>
</dbReference>
<dbReference type="RefSeq" id="XP_016877436.1">
    <property type="nucleotide sequence ID" value="XM_017021947.1"/>
</dbReference>
<dbReference type="RefSeq" id="XP_016877437.1">
    <property type="nucleotide sequence ID" value="XM_017021948.3"/>
</dbReference>
<dbReference type="RefSeq" id="XP_024305616.1">
    <property type="nucleotide sequence ID" value="XM_024449848.2"/>
</dbReference>
<dbReference type="RefSeq" id="XP_047288141.1">
    <property type="nucleotide sequence ID" value="XM_047432185.1"/>
</dbReference>
<dbReference type="RefSeq" id="XP_047288142.1">
    <property type="nucleotide sequence ID" value="XM_047432186.1"/>
</dbReference>
<dbReference type="RefSeq" id="XP_054233323.1">
    <property type="nucleotide sequence ID" value="XM_054377348.1"/>
</dbReference>
<dbReference type="RefSeq" id="XP_054233324.1">
    <property type="nucleotide sequence ID" value="XM_054377349.1"/>
</dbReference>
<dbReference type="RefSeq" id="XP_054233325.1">
    <property type="nucleotide sequence ID" value="XM_054377350.1"/>
</dbReference>
<dbReference type="RefSeq" id="XP_054233326.1">
    <property type="nucleotide sequence ID" value="XM_054377351.1"/>
</dbReference>
<dbReference type="SMR" id="Q8WWG1"/>
<dbReference type="BioGRID" id="126957">
    <property type="interactions" value="5"/>
</dbReference>
<dbReference type="FunCoup" id="Q8WWG1">
    <property type="interactions" value="324"/>
</dbReference>
<dbReference type="IntAct" id="Q8WWG1">
    <property type="interactions" value="5"/>
</dbReference>
<dbReference type="MINT" id="Q8WWG1"/>
<dbReference type="STRING" id="9606.ENSP00000378367"/>
<dbReference type="GlyCosmos" id="Q8WWG1">
    <property type="glycosylation" value="1 site, No reported glycans"/>
</dbReference>
<dbReference type="GlyGen" id="Q8WWG1">
    <property type="glycosylation" value="1 site, 1 N-linked glycan (1 site)"/>
</dbReference>
<dbReference type="BioMuta" id="NRG4"/>
<dbReference type="DMDM" id="28201832"/>
<dbReference type="PaxDb" id="9606-ENSP00000378367"/>
<dbReference type="PeptideAtlas" id="Q8WWG1"/>
<dbReference type="Antibodypedia" id="2623">
    <property type="antibodies" value="223 antibodies from 23 providers"/>
</dbReference>
<dbReference type="DNASU" id="145957"/>
<dbReference type="Ensembl" id="ENST00000394907.8">
    <property type="protein sequence ID" value="ENSP00000378367.3"/>
    <property type="gene ID" value="ENSG00000169752.17"/>
</dbReference>
<dbReference type="Ensembl" id="ENST00000566417.5">
    <property type="protein sequence ID" value="ENSP00000457335.1"/>
    <property type="gene ID" value="ENSG00000169752.17"/>
</dbReference>
<dbReference type="GeneID" id="145957"/>
<dbReference type="KEGG" id="hsa:145957"/>
<dbReference type="MANE-Select" id="ENST00000394907.8">
    <property type="protein sequence ID" value="ENSP00000378367.3"/>
    <property type="RefSeq nucleotide sequence ID" value="NM_138573.4"/>
    <property type="RefSeq protein sequence ID" value="NP_612640.1"/>
</dbReference>
<dbReference type="UCSC" id="uc002bbo.5">
    <property type="organism name" value="human"/>
</dbReference>
<dbReference type="AGR" id="HGNC:29862"/>
<dbReference type="CTD" id="145957"/>
<dbReference type="DisGeNET" id="145957"/>
<dbReference type="GeneCards" id="NRG4"/>
<dbReference type="HGNC" id="HGNC:29862">
    <property type="gene designation" value="NRG4"/>
</dbReference>
<dbReference type="HPA" id="ENSG00000169752">
    <property type="expression patterns" value="Tissue enriched (retina)"/>
</dbReference>
<dbReference type="MIM" id="610894">
    <property type="type" value="gene"/>
</dbReference>
<dbReference type="neXtProt" id="NX_Q8WWG1"/>
<dbReference type="OpenTargets" id="ENSG00000169752"/>
<dbReference type="PharmGKB" id="PA142671246"/>
<dbReference type="VEuPathDB" id="HostDB:ENSG00000169752"/>
<dbReference type="eggNOG" id="ENOG502S5EK">
    <property type="taxonomic scope" value="Eukaryota"/>
</dbReference>
<dbReference type="GeneTree" id="ENSGT00390000014815"/>
<dbReference type="InParanoid" id="Q8WWG1"/>
<dbReference type="OMA" id="AHHNHGE"/>
<dbReference type="OrthoDB" id="6162427at2759"/>
<dbReference type="PAN-GO" id="Q8WWG1">
    <property type="GO annotations" value="1 GO annotation based on evolutionary models"/>
</dbReference>
<dbReference type="PhylomeDB" id="Q8WWG1"/>
<dbReference type="PathwayCommons" id="Q8WWG1"/>
<dbReference type="Reactome" id="R-HSA-1227986">
    <property type="pathway name" value="Signaling by ERBB2"/>
</dbReference>
<dbReference type="Reactome" id="R-HSA-1236394">
    <property type="pathway name" value="Signaling by ERBB4"/>
</dbReference>
<dbReference type="Reactome" id="R-HSA-1250196">
    <property type="pathway name" value="SHC1 events in ERBB2 signaling"/>
</dbReference>
<dbReference type="Reactome" id="R-HSA-1250342">
    <property type="pathway name" value="PI3K events in ERBB4 signaling"/>
</dbReference>
<dbReference type="Reactome" id="R-HSA-1250347">
    <property type="pathway name" value="SHC1 events in ERBB4 signaling"/>
</dbReference>
<dbReference type="Reactome" id="R-HSA-1251985">
    <property type="pathway name" value="Nuclear signaling by ERBB4"/>
</dbReference>
<dbReference type="Reactome" id="R-HSA-1257604">
    <property type="pathway name" value="PIP3 activates AKT signaling"/>
</dbReference>
<dbReference type="Reactome" id="R-HSA-1963640">
    <property type="pathway name" value="GRB2 events in ERBB2 signaling"/>
</dbReference>
<dbReference type="Reactome" id="R-HSA-1963642">
    <property type="pathway name" value="PI3K events in ERBB2 signaling"/>
</dbReference>
<dbReference type="Reactome" id="R-HSA-2219530">
    <property type="pathway name" value="Constitutive Signaling by Aberrant PI3K in Cancer"/>
</dbReference>
<dbReference type="Reactome" id="R-HSA-5673001">
    <property type="pathway name" value="RAF/MAP kinase cascade"/>
</dbReference>
<dbReference type="Reactome" id="R-HSA-6785631">
    <property type="pathway name" value="ERBB2 Regulates Cell Motility"/>
</dbReference>
<dbReference type="Reactome" id="R-HSA-6811558">
    <property type="pathway name" value="PI5P, PP2A and IER3 Regulate PI3K/AKT Signaling"/>
</dbReference>
<dbReference type="Reactome" id="R-HSA-8847993">
    <property type="pathway name" value="ERBB2 Activates PTK6 Signaling"/>
</dbReference>
<dbReference type="Reactome" id="R-HSA-8863795">
    <property type="pathway name" value="Downregulation of ERBB2 signaling"/>
</dbReference>
<dbReference type="Reactome" id="R-HSA-9664565">
    <property type="pathway name" value="Signaling by ERBB2 KD Mutants"/>
</dbReference>
<dbReference type="Reactome" id="R-HSA-9665686">
    <property type="pathway name" value="Signaling by ERBB2 TMD/JMD mutants"/>
</dbReference>
<dbReference type="SignaLink" id="Q8WWG1"/>
<dbReference type="SIGNOR" id="Q8WWG1"/>
<dbReference type="BioGRID-ORCS" id="145957">
    <property type="hits" value="9 hits in 1143 CRISPR screens"/>
</dbReference>
<dbReference type="ChiTaRS" id="NRG4">
    <property type="organism name" value="human"/>
</dbReference>
<dbReference type="GeneWiki" id="NRG4"/>
<dbReference type="GenomeRNAi" id="145957"/>
<dbReference type="Pharos" id="Q8WWG1">
    <property type="development level" value="Tbio"/>
</dbReference>
<dbReference type="PRO" id="PR:Q8WWG1"/>
<dbReference type="Proteomes" id="UP000005640">
    <property type="component" value="Chromosome 15"/>
</dbReference>
<dbReference type="RNAct" id="Q8WWG1">
    <property type="molecule type" value="protein"/>
</dbReference>
<dbReference type="Bgee" id="ENSG00000169752">
    <property type="expression patterns" value="Expressed in body of pancreas and 100 other cell types or tissues"/>
</dbReference>
<dbReference type="ExpressionAtlas" id="Q8WWG1">
    <property type="expression patterns" value="baseline and differential"/>
</dbReference>
<dbReference type="GO" id="GO:0005576">
    <property type="term" value="C:extracellular region"/>
    <property type="evidence" value="ECO:0000304"/>
    <property type="project" value="Reactome"/>
</dbReference>
<dbReference type="GO" id="GO:0005615">
    <property type="term" value="C:extracellular space"/>
    <property type="evidence" value="ECO:0007669"/>
    <property type="project" value="Ensembl"/>
</dbReference>
<dbReference type="GO" id="GO:0005886">
    <property type="term" value="C:plasma membrane"/>
    <property type="evidence" value="ECO:0007669"/>
    <property type="project" value="UniProtKB-SubCell"/>
</dbReference>
<dbReference type="GO" id="GO:0008083">
    <property type="term" value="F:growth factor activity"/>
    <property type="evidence" value="ECO:0007669"/>
    <property type="project" value="UniProtKB-KW"/>
</dbReference>
<dbReference type="GO" id="GO:0048018">
    <property type="term" value="F:receptor ligand activity"/>
    <property type="evidence" value="ECO:0000314"/>
    <property type="project" value="MGI"/>
</dbReference>
<dbReference type="GO" id="GO:0038138">
    <property type="term" value="P:ERBB4-ERBB4 signaling pathway"/>
    <property type="evidence" value="ECO:0007669"/>
    <property type="project" value="Ensembl"/>
</dbReference>
<dbReference type="CDD" id="cd00054">
    <property type="entry name" value="EGF_CA"/>
    <property type="match status" value="1"/>
</dbReference>
<dbReference type="FunFam" id="2.10.25.10:FF:000356">
    <property type="entry name" value="pro-neuregulin-4, membrane-bound isoform"/>
    <property type="match status" value="1"/>
</dbReference>
<dbReference type="Gene3D" id="2.10.25.10">
    <property type="entry name" value="Laminin"/>
    <property type="match status" value="1"/>
</dbReference>
<dbReference type="InterPro" id="IPR000742">
    <property type="entry name" value="EGF-like_dom"/>
</dbReference>
<dbReference type="PANTHER" id="PTHR10740:SF10">
    <property type="entry name" value="EPIGEN"/>
    <property type="match status" value="1"/>
</dbReference>
<dbReference type="PANTHER" id="PTHR10740">
    <property type="entry name" value="TRANSFORMING GROWTH FACTOR ALPHA"/>
    <property type="match status" value="1"/>
</dbReference>
<dbReference type="Pfam" id="PF00008">
    <property type="entry name" value="EGF"/>
    <property type="match status" value="1"/>
</dbReference>
<dbReference type="PRINTS" id="PR00009">
    <property type="entry name" value="EGFTGF"/>
</dbReference>
<dbReference type="SMART" id="SM00181">
    <property type="entry name" value="EGF"/>
    <property type="match status" value="1"/>
</dbReference>
<dbReference type="SUPFAM" id="SSF57196">
    <property type="entry name" value="EGF/Laminin"/>
    <property type="match status" value="1"/>
</dbReference>
<dbReference type="PROSITE" id="PS00022">
    <property type="entry name" value="EGF_1"/>
    <property type="match status" value="1"/>
</dbReference>
<dbReference type="PROSITE" id="PS50026">
    <property type="entry name" value="EGF_3"/>
    <property type="match status" value="1"/>
</dbReference>
<keyword id="KW-1003">Cell membrane</keyword>
<keyword id="KW-1015">Disulfide bond</keyword>
<keyword id="KW-0245">EGF-like domain</keyword>
<keyword id="KW-0325">Glycoprotein</keyword>
<keyword id="KW-0339">Growth factor</keyword>
<keyword id="KW-0472">Membrane</keyword>
<keyword id="KW-1185">Reference proteome</keyword>
<keyword id="KW-0964">Secreted</keyword>
<keyword id="KW-0812">Transmembrane</keyword>
<keyword id="KW-1133">Transmembrane helix</keyword>
<accession>Q8WWG1</accession>
<accession>A6NIE8</accession>
<comment type="function">
    <text evidence="1">Low affinity ligand for the ERBB4 tyrosine kinase receptor. Concomitantly recruits ERBB1 and ERBB2 coreceptors, resulting in ligand-stimulated tyrosine phosphorylation and activation of the ERBB receptors. Does not bind to the ERBB1, ERBB2 and ERBB3 receptors (By similarity).</text>
</comment>
<comment type="subunit">
    <text evidence="1">Interacts with ERBB4.</text>
</comment>
<comment type="interaction">
    <interactant intactId="EBI-8637292">
        <id>Q8WWG1</id>
    </interactant>
    <interactant intactId="EBI-1045797">
        <id>Q8N5K1</id>
        <label>CISD2</label>
    </interactant>
    <organismsDiffer>false</organismsDiffer>
    <experiments>3</experiments>
</comment>
<comment type="interaction">
    <interactant intactId="EBI-8637292">
        <id>Q8WWG1</id>
    </interactant>
    <interactant intactId="EBI-781551">
        <id>Q9Y282</id>
        <label>ERGIC3</label>
    </interactant>
    <organismsDiffer>false</organismsDiffer>
    <experiments>3</experiments>
</comment>
<comment type="interaction">
    <interactant intactId="EBI-8637292">
        <id>Q8WWG1</id>
    </interactant>
    <interactant intactId="EBI-743099">
        <id>Q969F0</id>
        <label>FATE1</label>
    </interactant>
    <organismsDiffer>false</organismsDiffer>
    <experiments>7</experiments>
</comment>
<comment type="interaction">
    <interactant intactId="EBI-8637292">
        <id>Q8WWG1</id>
    </interactant>
    <interactant intactId="EBI-2820517">
        <id>Q8TAF8</id>
        <label>LHFPL5</label>
    </interactant>
    <organismsDiffer>false</organismsDiffer>
    <experiments>3</experiments>
</comment>
<comment type="subcellular location">
    <molecule>Pro-neuregulin-4, membrane-bound isoform</molecule>
    <subcellularLocation>
        <location evidence="1">Cell membrane</location>
        <topology evidence="1">Single-pass type I membrane protein</topology>
    </subcellularLocation>
    <text evidence="1">Does not seem to be active.</text>
</comment>
<comment type="subcellular location">
    <molecule>Neuregulin-4</molecule>
    <subcellularLocation>
        <location evidence="1">Secreted</location>
    </subcellularLocation>
</comment>
<comment type="domain">
    <text evidence="1">The cytoplasmic domain may be involved in the regulation of trafficking and proteolytic processing. Regulation of the proteolytic processing involves initial intracellular domain dimerization (By similarity).</text>
</comment>
<comment type="domain">
    <text evidence="1">ERBB receptor binding is elicited entirely by the EGF-like domain.</text>
</comment>
<comment type="PTM">
    <text evidence="1">Proteolytic cleavage close to the plasma membrane on the external face leads to the release of the soluble growth factor form.</text>
</comment>
<comment type="PTM">
    <text evidence="1">Extensive glycosylation precedes the proteolytic cleavage.</text>
</comment>
<comment type="similarity">
    <text evidence="4">Belongs to the neuregulin family.</text>
</comment>
<reference key="1">
    <citation type="journal article" date="2006" name="Nature">
        <title>Analysis of the DNA sequence and duplication history of human chromosome 15.</title>
        <authorList>
            <person name="Zody M.C."/>
            <person name="Garber M."/>
            <person name="Sharpe T."/>
            <person name="Young S.K."/>
            <person name="Rowen L."/>
            <person name="O'Neill K."/>
            <person name="Whittaker C.A."/>
            <person name="Kamal M."/>
            <person name="Chang J.L."/>
            <person name="Cuomo C.A."/>
            <person name="Dewar K."/>
            <person name="FitzGerald M.G."/>
            <person name="Kodira C.D."/>
            <person name="Madan A."/>
            <person name="Qin S."/>
            <person name="Yang X."/>
            <person name="Abbasi N."/>
            <person name="Abouelleil A."/>
            <person name="Arachchi H.M."/>
            <person name="Baradarani L."/>
            <person name="Birditt B."/>
            <person name="Bloom S."/>
            <person name="Bloom T."/>
            <person name="Borowsky M.L."/>
            <person name="Burke J."/>
            <person name="Butler J."/>
            <person name="Cook A."/>
            <person name="DeArellano K."/>
            <person name="DeCaprio D."/>
            <person name="Dorris L. III"/>
            <person name="Dors M."/>
            <person name="Eichler E.E."/>
            <person name="Engels R."/>
            <person name="Fahey J."/>
            <person name="Fleetwood P."/>
            <person name="Friedman C."/>
            <person name="Gearin G."/>
            <person name="Hall J.L."/>
            <person name="Hensley G."/>
            <person name="Johnson E."/>
            <person name="Jones C."/>
            <person name="Kamat A."/>
            <person name="Kaur A."/>
            <person name="Locke D.P."/>
            <person name="Madan A."/>
            <person name="Munson G."/>
            <person name="Jaffe D.B."/>
            <person name="Lui A."/>
            <person name="Macdonald P."/>
            <person name="Mauceli E."/>
            <person name="Naylor J.W."/>
            <person name="Nesbitt R."/>
            <person name="Nicol R."/>
            <person name="O'Leary S.B."/>
            <person name="Ratcliffe A."/>
            <person name="Rounsley S."/>
            <person name="She X."/>
            <person name="Sneddon K.M.B."/>
            <person name="Stewart S."/>
            <person name="Sougnez C."/>
            <person name="Stone S.M."/>
            <person name="Topham K."/>
            <person name="Vincent D."/>
            <person name="Wang S."/>
            <person name="Zimmer A.R."/>
            <person name="Birren B.W."/>
            <person name="Hood L."/>
            <person name="Lander E.S."/>
            <person name="Nusbaum C."/>
        </authorList>
    </citation>
    <scope>NUCLEOTIDE SEQUENCE [LARGE SCALE GENOMIC DNA]</scope>
</reference>
<reference key="2">
    <citation type="submission" date="2005-09" db="EMBL/GenBank/DDBJ databases">
        <authorList>
            <person name="Mural R.J."/>
            <person name="Istrail S."/>
            <person name="Sutton G.G."/>
            <person name="Florea L."/>
            <person name="Halpern A.L."/>
            <person name="Mobarry C.M."/>
            <person name="Lippert R."/>
            <person name="Walenz B."/>
            <person name="Shatkay H."/>
            <person name="Dew I."/>
            <person name="Miller J.R."/>
            <person name="Flanigan M.J."/>
            <person name="Edwards N.J."/>
            <person name="Bolanos R."/>
            <person name="Fasulo D."/>
            <person name="Halldorsson B.V."/>
            <person name="Hannenhalli S."/>
            <person name="Turner R."/>
            <person name="Yooseph S."/>
            <person name="Lu F."/>
            <person name="Nusskern D.R."/>
            <person name="Shue B.C."/>
            <person name="Zheng X.H."/>
            <person name="Zhong F."/>
            <person name="Delcher A.L."/>
            <person name="Huson D.H."/>
            <person name="Kravitz S.A."/>
            <person name="Mouchard L."/>
            <person name="Reinert K."/>
            <person name="Remington K.A."/>
            <person name="Clark A.G."/>
            <person name="Waterman M.S."/>
            <person name="Eichler E.E."/>
            <person name="Adams M.D."/>
            <person name="Hunkapiller M.W."/>
            <person name="Myers E.W."/>
            <person name="Venter J.C."/>
        </authorList>
    </citation>
    <scope>NUCLEOTIDE SEQUENCE [LARGE SCALE GENOMIC DNA]</scope>
</reference>
<reference key="3">
    <citation type="journal article" date="2004" name="Genome Res.">
        <title>The status, quality, and expansion of the NIH full-length cDNA project: the Mammalian Gene Collection (MGC).</title>
        <authorList>
            <consortium name="The MGC Project Team"/>
        </authorList>
    </citation>
    <scope>NUCLEOTIDE SEQUENCE [LARGE SCALE MRNA]</scope>
    <source>
        <tissue>Liver</tissue>
    </source>
</reference>
<proteinExistence type="evidence at protein level"/>